<organism>
    <name type="scientific">Homo sapiens</name>
    <name type="common">Human</name>
    <dbReference type="NCBI Taxonomy" id="9606"/>
    <lineage>
        <taxon>Eukaryota</taxon>
        <taxon>Metazoa</taxon>
        <taxon>Chordata</taxon>
        <taxon>Craniata</taxon>
        <taxon>Vertebrata</taxon>
        <taxon>Euteleostomi</taxon>
        <taxon>Mammalia</taxon>
        <taxon>Eutheria</taxon>
        <taxon>Euarchontoglires</taxon>
        <taxon>Primates</taxon>
        <taxon>Haplorrhini</taxon>
        <taxon>Catarrhini</taxon>
        <taxon>Hominidae</taxon>
        <taxon>Homo</taxon>
    </lineage>
</organism>
<feature type="chain" id="PRO_0000311224" description="Fanconi-associated nuclease 1">
    <location>
        <begin position="1"/>
        <end position="1017"/>
    </location>
</feature>
<feature type="domain" description="VRR-NUC">
    <location>
        <begin position="895"/>
        <end position="1007"/>
    </location>
</feature>
<feature type="zinc finger region" description="UBZ4-type" evidence="3">
    <location>
        <begin position="41"/>
        <end position="69"/>
    </location>
</feature>
<feature type="region of interest" description="Disordered" evidence="4">
    <location>
        <begin position="1"/>
        <end position="23"/>
    </location>
</feature>
<feature type="region of interest" description="Disordered" evidence="4">
    <location>
        <begin position="95"/>
        <end position="121"/>
    </location>
</feature>
<feature type="region of interest" description="Disordered" evidence="4">
    <location>
        <begin position="170"/>
        <end position="189"/>
    </location>
</feature>
<feature type="coiled-coil region" evidence="2">
    <location>
        <begin position="671"/>
        <end position="696"/>
    </location>
</feature>
<feature type="short sequence motif" description="D-box" evidence="24">
    <location>
        <begin position="14"/>
        <end position="22"/>
    </location>
</feature>
<feature type="short sequence motif" description="KEN box" evidence="24">
    <location>
        <begin position="212"/>
        <end position="214"/>
    </location>
</feature>
<feature type="compositionally biased region" description="Basic and acidic residues" evidence="4">
    <location>
        <begin position="1"/>
        <end position="10"/>
    </location>
</feature>
<feature type="compositionally biased region" description="Basic residues" evidence="4">
    <location>
        <begin position="11"/>
        <end position="23"/>
    </location>
</feature>
<feature type="compositionally biased region" description="Polar residues" evidence="4">
    <location>
        <begin position="179"/>
        <end position="189"/>
    </location>
</feature>
<feature type="binding site" evidence="3">
    <location>
        <position position="44"/>
    </location>
    <ligand>
        <name>Zn(2+)</name>
        <dbReference type="ChEBI" id="CHEBI:29105"/>
    </ligand>
</feature>
<feature type="binding site" evidence="3">
    <location>
        <position position="47"/>
    </location>
    <ligand>
        <name>Zn(2+)</name>
        <dbReference type="ChEBI" id="CHEBI:29105"/>
    </ligand>
</feature>
<feature type="binding site" evidence="3">
    <location>
        <position position="59"/>
    </location>
    <ligand>
        <name>Zn(2+)</name>
        <dbReference type="ChEBI" id="CHEBI:29105"/>
    </ligand>
</feature>
<feature type="binding site" evidence="3">
    <location>
        <position position="64"/>
    </location>
    <ligand>
        <name>Zn(2+)</name>
        <dbReference type="ChEBI" id="CHEBI:29105"/>
    </ligand>
</feature>
<feature type="binding site" evidence="1">
    <location>
        <position position="834"/>
    </location>
    <ligand>
        <name>Mn(2+)</name>
        <dbReference type="ChEBI" id="CHEBI:29035"/>
        <label>2</label>
    </ligand>
</feature>
<feature type="binding site" evidence="1">
    <location>
        <position position="960"/>
    </location>
    <ligand>
        <name>Mn(2+)</name>
        <dbReference type="ChEBI" id="CHEBI:29035"/>
        <label>1</label>
    </ligand>
</feature>
<feature type="binding site" evidence="1">
    <location>
        <position position="960"/>
    </location>
    <ligand>
        <name>Mn(2+)</name>
        <dbReference type="ChEBI" id="CHEBI:29035"/>
        <label>2</label>
    </ligand>
</feature>
<feature type="binding site" evidence="1">
    <location>
        <position position="975"/>
    </location>
    <ligand>
        <name>Mn(2+)</name>
        <dbReference type="ChEBI" id="CHEBI:29035"/>
        <label>1</label>
    </ligand>
</feature>
<feature type="binding site" evidence="1">
    <location>
        <position position="976"/>
    </location>
    <ligand>
        <name>Mn(2+)</name>
        <dbReference type="ChEBI" id="CHEBI:29035"/>
        <label>1</label>
    </ligand>
</feature>
<feature type="modified residue" description="Phosphoserine" evidence="25">
    <location>
        <position position="180"/>
    </location>
</feature>
<feature type="splice variant" id="VSP_029429" description="In isoform 2." evidence="18 19">
    <original>AKALAGQ</original>
    <variation>FCWLLLQ</variation>
    <location>
        <begin position="527"/>
        <end position="533"/>
    </location>
</feature>
<feature type="splice variant" id="VSP_029430" description="In isoform 2." evidence="18 19">
    <location>
        <begin position="534"/>
        <end position="1017"/>
    </location>
</feature>
<feature type="sequence variant" id="VAR_037167" description="In dbSNP:rs4779794." evidence="5">
    <original>G</original>
    <variation>E</variation>
    <location>
        <position position="233"/>
    </location>
</feature>
<feature type="sequence variant" id="VAR_068958" description="In KMIN; partially complement cell survival upon exposure to mitomycin C." evidence="11">
    <original>C</original>
    <variation>R</variation>
    <location>
        <position position="871"/>
    </location>
</feature>
<feature type="sequence variant" id="VAR_068959" description="In KMIN." evidence="11">
    <original>Q</original>
    <variation>P</variation>
    <location>
        <position position="929"/>
    </location>
</feature>
<feature type="sequence variant" id="VAR_068960" description="In KMIN; dbSNP:rs1270571213." evidence="11">
    <original>G</original>
    <variation>D</variation>
    <location>
        <position position="937"/>
    </location>
</feature>
<feature type="sequence variant" id="VAR_068961" description="In KMIN; dbSNP:rs751703979." evidence="11">
    <original>D</original>
    <variation>N</variation>
    <location>
        <position position="960"/>
    </location>
</feature>
<feature type="mutagenesis site" description="Abolishes interaction with monoubiquitinated FANCD2; when associated with A-47." evidence="7 8 9">
    <original>C</original>
    <variation>A</variation>
    <location>
        <position position="44"/>
    </location>
</feature>
<feature type="mutagenesis site" description="Abolishes interaction with monoubiquitinated FANCD2; when associated with A-44." evidence="7 8">
    <original>C</original>
    <variation>A</variation>
    <location>
        <position position="47"/>
    </location>
</feature>
<feature type="mutagenesis site" description="Still localized to sites of DNA damage but the strength of the signal is diminished." evidence="8">
    <original>L</original>
    <variation>P</variation>
    <location>
        <position position="477"/>
    </location>
</feature>
<feature type="mutagenesis site" description="Strongly reduced affinity for sites that have a 5'-terminal phosphate anchor at a flap of 1 nucleotide; when associated with A-952." evidence="16">
    <original>R</original>
    <variation>A</variation>
    <location>
        <position position="706"/>
    </location>
</feature>
<feature type="mutagenesis site" description="Loss of nuclease activity; when associated with A-960; A-975 and A-977." evidence="8">
    <original>Q</original>
    <variation>A</variation>
    <location>
        <position position="864"/>
    </location>
</feature>
<feature type="mutagenesis site" description="Strongly reduced affinity for sites that have a 5'-terminal phosphate anchor at a flap of 1 nucleotide; when associated with A-706." evidence="16">
    <original>R</original>
    <variation>A</variation>
    <location>
        <position position="952"/>
    </location>
</feature>
<feature type="mutagenesis site" description="Loss of nuclease activity. Loss of nuclease activity; when associated with A-864; A-975 and A-977." evidence="7 8 9">
    <original>D</original>
    <variation>A</variation>
    <location>
        <position position="960"/>
    </location>
</feature>
<feature type="mutagenesis site" description="Loss of nuclease activity; when associated with A-864; A-960 and A-977." evidence="8">
    <original>E</original>
    <variation>A</variation>
    <location>
        <position position="975"/>
    </location>
</feature>
<feature type="mutagenesis site" description="Loss of nuclease activity; when associated with A-864; A-960 and A-975." evidence="8 9">
    <original>K</original>
    <variation>A</variation>
    <location>
        <position position="977"/>
    </location>
</feature>
<feature type="mutagenesis site" description="Loss of nuclease activity." evidence="6">
    <original>DR</original>
    <variation>AA</variation>
    <location>
        <begin position="981"/>
        <end position="982"/>
    </location>
</feature>
<feature type="sequence conflict" description="In Ref. 5; AAH47882." evidence="24" ref="5">
    <original>D</original>
    <variation>DK</variation>
    <location>
        <position position="9"/>
    </location>
</feature>
<feature type="sequence conflict" description="In Ref. 3; BAF83676." evidence="24" ref="3">
    <original>S</original>
    <variation>P</variation>
    <location>
        <position position="319"/>
    </location>
</feature>
<feature type="sequence conflict" description="In Ref. 1; BAA76862." evidence="24" ref="1">
    <original>V</original>
    <variation>A</variation>
    <location>
        <position position="487"/>
    </location>
</feature>
<feature type="helix" evidence="26">
    <location>
        <begin position="374"/>
        <end position="388"/>
    </location>
</feature>
<feature type="helix" evidence="26">
    <location>
        <begin position="390"/>
        <end position="393"/>
    </location>
</feature>
<feature type="helix" evidence="26">
    <location>
        <begin position="398"/>
        <end position="408"/>
    </location>
</feature>
<feature type="helix" evidence="26">
    <location>
        <begin position="412"/>
        <end position="422"/>
    </location>
</feature>
<feature type="helix" evidence="26">
    <location>
        <begin position="431"/>
        <end position="433"/>
    </location>
</feature>
<feature type="turn" evidence="26">
    <location>
        <begin position="437"/>
        <end position="439"/>
    </location>
</feature>
<feature type="helix" evidence="26">
    <location>
        <begin position="444"/>
        <end position="452"/>
    </location>
</feature>
<feature type="strand" evidence="26">
    <location>
        <begin position="455"/>
        <end position="458"/>
    </location>
</feature>
<feature type="helix" evidence="26">
    <location>
        <begin position="459"/>
        <end position="461"/>
    </location>
</feature>
<feature type="helix" evidence="26">
    <location>
        <begin position="465"/>
        <end position="471"/>
    </location>
</feature>
<feature type="helix" evidence="26">
    <location>
        <begin position="474"/>
        <end position="483"/>
    </location>
</feature>
<feature type="helix" evidence="26">
    <location>
        <begin position="493"/>
        <end position="503"/>
    </location>
</feature>
<feature type="helix" evidence="26">
    <location>
        <begin position="520"/>
        <end position="531"/>
    </location>
</feature>
<feature type="strand" evidence="26">
    <location>
        <begin position="533"/>
        <end position="537"/>
    </location>
</feature>
<feature type="helix" evidence="26">
    <location>
        <begin position="539"/>
        <end position="552"/>
    </location>
</feature>
<feature type="helix" evidence="26">
    <location>
        <begin position="554"/>
        <end position="556"/>
    </location>
</feature>
<feature type="turn" evidence="30">
    <location>
        <begin position="557"/>
        <end position="559"/>
    </location>
</feature>
<feature type="turn" evidence="27">
    <location>
        <begin position="563"/>
        <end position="565"/>
    </location>
</feature>
<feature type="helix" evidence="30">
    <location>
        <begin position="566"/>
        <end position="568"/>
    </location>
</feature>
<feature type="helix" evidence="32">
    <location>
        <begin position="573"/>
        <end position="575"/>
    </location>
</feature>
<feature type="helix" evidence="26">
    <location>
        <begin position="577"/>
        <end position="580"/>
    </location>
</feature>
<feature type="strand" evidence="30">
    <location>
        <begin position="595"/>
        <end position="598"/>
    </location>
</feature>
<feature type="helix" evidence="26">
    <location>
        <begin position="599"/>
        <end position="620"/>
    </location>
</feature>
<feature type="helix" evidence="26">
    <location>
        <begin position="624"/>
        <end position="639"/>
    </location>
</feature>
<feature type="turn" evidence="26">
    <location>
        <begin position="640"/>
        <end position="643"/>
    </location>
</feature>
<feature type="helix" evidence="26">
    <location>
        <begin position="645"/>
        <end position="651"/>
    </location>
</feature>
<feature type="helix" evidence="26">
    <location>
        <begin position="655"/>
        <end position="658"/>
    </location>
</feature>
<feature type="helix" evidence="26">
    <location>
        <begin position="662"/>
        <end position="679"/>
    </location>
</feature>
<feature type="helix" evidence="26">
    <location>
        <begin position="683"/>
        <end position="695"/>
    </location>
</feature>
<feature type="strand" evidence="27">
    <location>
        <begin position="697"/>
        <end position="699"/>
    </location>
</feature>
<feature type="helix" evidence="26">
    <location>
        <begin position="701"/>
        <end position="703"/>
    </location>
</feature>
<feature type="helix" evidence="26">
    <location>
        <begin position="704"/>
        <end position="716"/>
    </location>
</feature>
<feature type="helix" evidence="26">
    <location>
        <begin position="722"/>
        <end position="734"/>
    </location>
</feature>
<feature type="helix" evidence="26">
    <location>
        <begin position="740"/>
        <end position="754"/>
    </location>
</feature>
<feature type="helix" evidence="26">
    <location>
        <begin position="757"/>
        <end position="759"/>
    </location>
</feature>
<feature type="helix" evidence="26">
    <location>
        <begin position="761"/>
        <end position="765"/>
    </location>
</feature>
<feature type="strand" evidence="26">
    <location>
        <begin position="778"/>
        <end position="783"/>
    </location>
</feature>
<feature type="strand" evidence="29">
    <location>
        <begin position="786"/>
        <end position="788"/>
    </location>
</feature>
<feature type="strand" evidence="28">
    <location>
        <begin position="796"/>
        <end position="798"/>
    </location>
</feature>
<feature type="strand" evidence="30">
    <location>
        <begin position="804"/>
        <end position="806"/>
    </location>
</feature>
<feature type="strand" evidence="28">
    <location>
        <begin position="811"/>
        <end position="813"/>
    </location>
</feature>
<feature type="helix" evidence="26">
    <location>
        <begin position="814"/>
        <end position="824"/>
    </location>
</feature>
<feature type="strand" evidence="26">
    <location>
        <begin position="829"/>
        <end position="832"/>
    </location>
</feature>
<feature type="helix" evidence="26">
    <location>
        <begin position="835"/>
        <end position="850"/>
    </location>
</feature>
<feature type="strand" evidence="31">
    <location>
        <begin position="861"/>
        <end position="863"/>
    </location>
</feature>
<feature type="turn" evidence="26">
    <location>
        <begin position="868"/>
        <end position="871"/>
    </location>
</feature>
<feature type="helix" evidence="26">
    <location>
        <begin position="874"/>
        <end position="877"/>
    </location>
</feature>
<feature type="helix" evidence="26">
    <location>
        <begin position="880"/>
        <end position="891"/>
    </location>
</feature>
<feature type="helix" evidence="26">
    <location>
        <begin position="895"/>
        <end position="909"/>
    </location>
</feature>
<feature type="strand" evidence="26">
    <location>
        <begin position="921"/>
        <end position="924"/>
    </location>
</feature>
<feature type="helix" evidence="26">
    <location>
        <begin position="925"/>
        <end position="949"/>
    </location>
</feature>
<feature type="helix" evidence="26">
    <location>
        <begin position="951"/>
        <end position="955"/>
    </location>
</feature>
<feature type="strand" evidence="26">
    <location>
        <begin position="960"/>
        <end position="964"/>
    </location>
</feature>
<feature type="turn" evidence="26">
    <location>
        <begin position="966"/>
        <end position="968"/>
    </location>
</feature>
<feature type="strand" evidence="26">
    <location>
        <begin position="971"/>
        <end position="977"/>
    </location>
</feature>
<feature type="helix" evidence="26">
    <location>
        <begin position="985"/>
        <end position="996"/>
    </location>
</feature>
<feature type="strand" evidence="26">
    <location>
        <begin position="1001"/>
        <end position="1007"/>
    </location>
</feature>
<comment type="function">
    <text evidence="6 7 8 9 14 15 16">Nuclease required for the repair of DNA interstrand cross-links (ICL) recruited at sites of DNA damage by monoubiquitinated FANCD2. Specifically involved in repair of ICL-induced DNA breaks by being required for efficient homologous recombination, probably in the resolution of homologous recombination intermediates (PubMed:20603015, PubMed:20603016, PubMed:20603073, PubMed:20671156, PubMed:24981866, PubMed:25430771). Not involved in DNA double-strand breaks resection (PubMed:20603015, PubMed:20603016). Acts as a 5'-3' exonuclease that anchors at a cut end of DNA and cleaves DNA successively at every third nucleotide, allowing to excise an ICL from one strand through flanking incisions. Probably keeps excising with 3'-flap annealing until it reaches and unhooks the ICL (PubMed:25430771). Acts at sites that have a 5'-terminal phosphate anchor at a nick or a 1- or 2-nucleotide flap and is augmented by a 3' flap (PubMed:25430771). Also has endonuclease activity toward 5'-flaps (PubMed:20603015, PubMed:20603016, PubMed:24981866).</text>
</comment>
<comment type="catalytic activity">
    <reaction evidence="6 7">
        <text>Hydrolytically removes 5'-nucleotides successively from the 3'-hydroxy termini of 3'-hydroxy-terminated oligonucleotides.</text>
        <dbReference type="EC" id="3.1.4.1"/>
    </reaction>
</comment>
<comment type="cofactor">
    <cofactor evidence="7">
        <name>Mn(2+)</name>
        <dbReference type="ChEBI" id="CHEBI:29035"/>
    </cofactor>
    <cofactor evidence="7">
        <name>Mg(2+)</name>
        <dbReference type="ChEBI" id="CHEBI:18420"/>
    </cofactor>
    <text evidence="1 7">Binds 2 magnesium or manganese ions per subunit.</text>
</comment>
<comment type="subunit">
    <text evidence="6 7 8 9">Interacts with FANCD2 (when monoubiquitinated). Interacts with FANCI, MLH1, MLH3 and PMS2.</text>
</comment>
<comment type="subcellular location">
    <subcellularLocation>
        <location evidence="6 7 8 9 10">Nucleus</location>
    </subcellularLocation>
    <text evidence="6 7 10">Localizes at sites of DNA damage following recruitment by monoubiquitinated FANCD2 (PubMed:20603015, PubMed:20603016). Localizes to stalled replication forks via its UBZ4-type zinc finger (PubMed:20935496).</text>
</comment>
<comment type="alternative products">
    <event type="alternative splicing"/>
    <isoform>
        <id>Q9Y2M0-1</id>
        <name>1</name>
        <sequence type="displayed"/>
    </isoform>
    <isoform>
        <id>Q9Y2M0-2</id>
        <name>2</name>
        <sequence type="described" ref="VSP_029429 VSP_029430"/>
    </isoform>
</comment>
<comment type="domain">
    <text evidence="6 7 9 10">The UBZ4-type zinc finger specifically binds monoubiquitinated FANCD2.</text>
</comment>
<comment type="domain">
    <text evidence="12">The KEN box and D-box are required for interaction with FZR1/CDH1 and essential for APC(CDH1)-mediated ubiquitination.</text>
</comment>
<comment type="PTM">
    <text evidence="12">Ubiquitinated and degraded during mitotic exit by the APC/C-Cdh1 complex.</text>
</comment>
<comment type="disease" evidence="11">
    <disease id="DI-03532">
        <name>Interstitial nephritis, karyomegalic</name>
        <acronym>KMIN</acronym>
        <description>A rare kidney disease characterized by chronic tubulointerstitial nephritis associated with massively enlarged tubular epithelial cell nuclei. The clinical picture is associated with recurrent upper respiratory tract infections in addition to chronic kidney disease beginning in the third decade of life.</description>
        <dbReference type="MIM" id="614817"/>
    </disease>
    <text>The disease is caused by variants affecting the gene represented in this entry.</text>
</comment>
<comment type="disease">
    <text evidence="13">Schizophrenia and autism. Schizophrenia is a severe psychiatric disorder characterized by positive, negative, and cognitive symptoms, and it is associated with increased mortality and severely reduced fecundity. Autim is a complex multifactorial, pervasive developmental disorder characterized by impairments in reciprocal social interaction and communication, restricted and stereotyped patterns of interests and activities, and the presence of developmental abnormalities by 3 years of age. Most individuals with autism also manifest moderate intellectual disability. Disease susceptibility may be associated with variants affecting the gene represented in this entry.</text>
</comment>
<comment type="similarity">
    <text evidence="24">Belongs to the FAN1 family.</text>
</comment>
<comment type="sequence caution" evidence="24">
    <conflict type="erroneous initiation">
        <sequence resource="EMBL-CDS" id="AAH47882"/>
    </conflict>
    <text>Truncated N-terminus.</text>
</comment>
<comment type="sequence caution" evidence="24">
    <conflict type="erroneous initiation">
        <sequence resource="EMBL-CDS" id="BAA76862"/>
    </conflict>
    <text>Extended N-terminus.</text>
</comment>
<reference key="1">
    <citation type="journal article" date="1999" name="DNA Res.">
        <title>Prediction of the coding sequences of unidentified human genes. XIII. The complete sequences of 100 new cDNA clones from brain which code for large proteins in vitro.</title>
        <authorList>
            <person name="Nagase T."/>
            <person name="Ishikawa K."/>
            <person name="Suyama M."/>
            <person name="Kikuno R."/>
            <person name="Hirosawa M."/>
            <person name="Miyajima N."/>
            <person name="Tanaka A."/>
            <person name="Kotani H."/>
            <person name="Nomura N."/>
            <person name="Ohara O."/>
        </authorList>
    </citation>
    <scope>NUCLEOTIDE SEQUENCE [LARGE SCALE MRNA] (ISOFORM 1)</scope>
    <source>
        <tissue>Brain</tissue>
    </source>
</reference>
<reference key="2">
    <citation type="submission" date="2005-01" db="EMBL/GenBank/DDBJ databases">
        <authorList>
            <person name="Ohara O."/>
            <person name="Nagase T."/>
            <person name="Kikuno R."/>
        </authorList>
    </citation>
    <scope>SEQUENCE REVISION</scope>
</reference>
<reference key="3">
    <citation type="journal article" date="2004" name="Nat. Genet.">
        <title>Complete sequencing and characterization of 21,243 full-length human cDNAs.</title>
        <authorList>
            <person name="Ota T."/>
            <person name="Suzuki Y."/>
            <person name="Nishikawa T."/>
            <person name="Otsuki T."/>
            <person name="Sugiyama T."/>
            <person name="Irie R."/>
            <person name="Wakamatsu A."/>
            <person name="Hayashi K."/>
            <person name="Sato H."/>
            <person name="Nagai K."/>
            <person name="Kimura K."/>
            <person name="Makita H."/>
            <person name="Sekine M."/>
            <person name="Obayashi M."/>
            <person name="Nishi T."/>
            <person name="Shibahara T."/>
            <person name="Tanaka T."/>
            <person name="Ishii S."/>
            <person name="Yamamoto J."/>
            <person name="Saito K."/>
            <person name="Kawai Y."/>
            <person name="Isono Y."/>
            <person name="Nakamura Y."/>
            <person name="Nagahari K."/>
            <person name="Murakami K."/>
            <person name="Yasuda T."/>
            <person name="Iwayanagi T."/>
            <person name="Wagatsuma M."/>
            <person name="Shiratori A."/>
            <person name="Sudo H."/>
            <person name="Hosoiri T."/>
            <person name="Kaku Y."/>
            <person name="Kodaira H."/>
            <person name="Kondo H."/>
            <person name="Sugawara M."/>
            <person name="Takahashi M."/>
            <person name="Kanda K."/>
            <person name="Yokoi T."/>
            <person name="Furuya T."/>
            <person name="Kikkawa E."/>
            <person name="Omura Y."/>
            <person name="Abe K."/>
            <person name="Kamihara K."/>
            <person name="Katsuta N."/>
            <person name="Sato K."/>
            <person name="Tanikawa M."/>
            <person name="Yamazaki M."/>
            <person name="Ninomiya K."/>
            <person name="Ishibashi T."/>
            <person name="Yamashita H."/>
            <person name="Murakawa K."/>
            <person name="Fujimori K."/>
            <person name="Tanai H."/>
            <person name="Kimata M."/>
            <person name="Watanabe M."/>
            <person name="Hiraoka S."/>
            <person name="Chiba Y."/>
            <person name="Ishida S."/>
            <person name="Ono Y."/>
            <person name="Takiguchi S."/>
            <person name="Watanabe S."/>
            <person name="Yosida M."/>
            <person name="Hotuta T."/>
            <person name="Kusano J."/>
            <person name="Kanehori K."/>
            <person name="Takahashi-Fujii A."/>
            <person name="Hara H."/>
            <person name="Tanase T.-O."/>
            <person name="Nomura Y."/>
            <person name="Togiya S."/>
            <person name="Komai F."/>
            <person name="Hara R."/>
            <person name="Takeuchi K."/>
            <person name="Arita M."/>
            <person name="Imose N."/>
            <person name="Musashino K."/>
            <person name="Yuuki H."/>
            <person name="Oshima A."/>
            <person name="Sasaki N."/>
            <person name="Aotsuka S."/>
            <person name="Yoshikawa Y."/>
            <person name="Matsunawa H."/>
            <person name="Ichihara T."/>
            <person name="Shiohata N."/>
            <person name="Sano S."/>
            <person name="Moriya S."/>
            <person name="Momiyama H."/>
            <person name="Satoh N."/>
            <person name="Takami S."/>
            <person name="Terashima Y."/>
            <person name="Suzuki O."/>
            <person name="Nakagawa S."/>
            <person name="Senoh A."/>
            <person name="Mizoguchi H."/>
            <person name="Goto Y."/>
            <person name="Shimizu F."/>
            <person name="Wakebe H."/>
            <person name="Hishigaki H."/>
            <person name="Watanabe T."/>
            <person name="Sugiyama A."/>
            <person name="Takemoto M."/>
            <person name="Kawakami B."/>
            <person name="Yamazaki M."/>
            <person name="Watanabe K."/>
            <person name="Kumagai A."/>
            <person name="Itakura S."/>
            <person name="Fukuzumi Y."/>
            <person name="Fujimori Y."/>
            <person name="Komiyama M."/>
            <person name="Tashiro H."/>
            <person name="Tanigami A."/>
            <person name="Fujiwara T."/>
            <person name="Ono T."/>
            <person name="Yamada K."/>
            <person name="Fujii Y."/>
            <person name="Ozaki K."/>
            <person name="Hirao M."/>
            <person name="Ohmori Y."/>
            <person name="Kawabata A."/>
            <person name="Hikiji T."/>
            <person name="Kobatake N."/>
            <person name="Inagaki H."/>
            <person name="Ikema Y."/>
            <person name="Okamoto S."/>
            <person name="Okitani R."/>
            <person name="Kawakami T."/>
            <person name="Noguchi S."/>
            <person name="Itoh T."/>
            <person name="Shigeta K."/>
            <person name="Senba T."/>
            <person name="Matsumura K."/>
            <person name="Nakajima Y."/>
            <person name="Mizuno T."/>
            <person name="Morinaga M."/>
            <person name="Sasaki M."/>
            <person name="Togashi T."/>
            <person name="Oyama M."/>
            <person name="Hata H."/>
            <person name="Watanabe M."/>
            <person name="Komatsu T."/>
            <person name="Mizushima-Sugano J."/>
            <person name="Satoh T."/>
            <person name="Shirai Y."/>
            <person name="Takahashi Y."/>
            <person name="Nakagawa K."/>
            <person name="Okumura K."/>
            <person name="Nagase T."/>
            <person name="Nomura N."/>
            <person name="Kikuchi H."/>
            <person name="Masuho Y."/>
            <person name="Yamashita R."/>
            <person name="Nakai K."/>
            <person name="Yada T."/>
            <person name="Nakamura Y."/>
            <person name="Ohara O."/>
            <person name="Isogai T."/>
            <person name="Sugano S."/>
        </authorList>
    </citation>
    <scope>NUCLEOTIDE SEQUENCE [LARGE SCALE MRNA] (ISOFORM 2)</scope>
    <source>
        <tissue>Teratocarcinoma</tissue>
    </source>
</reference>
<reference key="4">
    <citation type="journal article" date="2006" name="Nature">
        <title>Analysis of the DNA sequence and duplication history of human chromosome 15.</title>
        <authorList>
            <person name="Zody M.C."/>
            <person name="Garber M."/>
            <person name="Sharpe T."/>
            <person name="Young S.K."/>
            <person name="Rowen L."/>
            <person name="O'Neill K."/>
            <person name="Whittaker C.A."/>
            <person name="Kamal M."/>
            <person name="Chang J.L."/>
            <person name="Cuomo C.A."/>
            <person name="Dewar K."/>
            <person name="FitzGerald M.G."/>
            <person name="Kodira C.D."/>
            <person name="Madan A."/>
            <person name="Qin S."/>
            <person name="Yang X."/>
            <person name="Abbasi N."/>
            <person name="Abouelleil A."/>
            <person name="Arachchi H.M."/>
            <person name="Baradarani L."/>
            <person name="Birditt B."/>
            <person name="Bloom S."/>
            <person name="Bloom T."/>
            <person name="Borowsky M.L."/>
            <person name="Burke J."/>
            <person name="Butler J."/>
            <person name="Cook A."/>
            <person name="DeArellano K."/>
            <person name="DeCaprio D."/>
            <person name="Dorris L. III"/>
            <person name="Dors M."/>
            <person name="Eichler E.E."/>
            <person name="Engels R."/>
            <person name="Fahey J."/>
            <person name="Fleetwood P."/>
            <person name="Friedman C."/>
            <person name="Gearin G."/>
            <person name="Hall J.L."/>
            <person name="Hensley G."/>
            <person name="Johnson E."/>
            <person name="Jones C."/>
            <person name="Kamat A."/>
            <person name="Kaur A."/>
            <person name="Locke D.P."/>
            <person name="Madan A."/>
            <person name="Munson G."/>
            <person name="Jaffe D.B."/>
            <person name="Lui A."/>
            <person name="Macdonald P."/>
            <person name="Mauceli E."/>
            <person name="Naylor J.W."/>
            <person name="Nesbitt R."/>
            <person name="Nicol R."/>
            <person name="O'Leary S.B."/>
            <person name="Ratcliffe A."/>
            <person name="Rounsley S."/>
            <person name="She X."/>
            <person name="Sneddon K.M.B."/>
            <person name="Stewart S."/>
            <person name="Sougnez C."/>
            <person name="Stone S.M."/>
            <person name="Topham K."/>
            <person name="Vincent D."/>
            <person name="Wang S."/>
            <person name="Zimmer A.R."/>
            <person name="Birren B.W."/>
            <person name="Hood L."/>
            <person name="Lander E.S."/>
            <person name="Nusbaum C."/>
        </authorList>
    </citation>
    <scope>NUCLEOTIDE SEQUENCE [LARGE SCALE GENOMIC DNA]</scope>
</reference>
<reference key="5">
    <citation type="journal article" date="2004" name="Genome Res.">
        <title>The status, quality, and expansion of the NIH full-length cDNA project: the Mammalian Gene Collection (MGC).</title>
        <authorList>
            <consortium name="The MGC Project Team"/>
        </authorList>
    </citation>
    <scope>NUCLEOTIDE SEQUENCE [LARGE SCALE MRNA] (ISOFORM 2)</scope>
    <scope>VARIANT GLU-233</scope>
    <source>
        <tissue>Lung</tissue>
    </source>
</reference>
<reference key="6">
    <citation type="journal article" date="2010" name="Cell">
        <title>Identification of KIAA1018/FAN1, a DNA repair nuclease recruited to DNA damage by monoubiquitinated FANCD2.</title>
        <authorList>
            <person name="MacKay C."/>
            <person name="Declais A.C."/>
            <person name="Lundin C."/>
            <person name="Agostinho A."/>
            <person name="Deans A.J."/>
            <person name="MacArtney T.J."/>
            <person name="Hofmann K."/>
            <person name="Gartner A."/>
            <person name="West S.C."/>
            <person name="Helleday T."/>
            <person name="Lilley D.M."/>
            <person name="Rouse J."/>
        </authorList>
    </citation>
    <scope>FUNCTION</scope>
    <scope>CATALYTIC ACTIVITY</scope>
    <scope>SUBCELLULAR LOCATION</scope>
    <scope>DOMAIN UBZ-TYPE</scope>
    <scope>INTERACTION WITH FANCD2 AND FANCI</scope>
    <scope>MUTAGENESIS OF 981-ASP-ARG-982</scope>
</reference>
<reference key="7">
    <citation type="journal article" date="2010" name="Cell">
        <title>Deficiency of FANCD2-associated nuclease KIAA1018/FAN1 sensitizes cells to interstrand crosslinking agents.</title>
        <authorList>
            <person name="Kratz K."/>
            <person name="Schopf B."/>
            <person name="Kaden S."/>
            <person name="Sendoel A."/>
            <person name="Eberhard R."/>
            <person name="Lademann C."/>
            <person name="Cannavo E."/>
            <person name="Sartori A.A."/>
            <person name="Hengartner M.O."/>
            <person name="Jiricny J."/>
        </authorList>
    </citation>
    <scope>FUNCTION</scope>
    <scope>CATALYTIC ACTIVITY</scope>
    <scope>SUBCELLULAR LOCATION</scope>
    <scope>COFACTOR</scope>
    <scope>DOMAIN UBZ-TYPE</scope>
    <scope>INTERACTION WITH FANCD2</scope>
    <scope>MUTAGENESIS OF CYS-44; CYS-47 AND ASP-960</scope>
</reference>
<reference key="8">
    <citation type="journal article" date="2010" name="Cell Cycle">
        <title>Human KIAA1018/FAN1 localizes to stalled replication forks via its ubiquitin-binding domain.</title>
        <authorList>
            <person name="Shereda R.D."/>
            <person name="Machida Y."/>
            <person name="Machida Y.J."/>
        </authorList>
    </citation>
    <scope>SUBCELLULAR LOCATION</scope>
    <scope>DOMAIN UBZ-TYPE</scope>
</reference>
<reference key="9">
    <citation type="journal article" date="2010" name="Mol. Cell">
        <title>A genetic screen identifies FAN1, a Fanconi anemia-associated nuclease necessary for DNA interstrand crosslink repair.</title>
        <authorList>
            <person name="Smogorzewska A."/>
            <person name="Desetty R."/>
            <person name="Saito T.T."/>
            <person name="Schlabach M."/>
            <person name="Lach F.P."/>
            <person name="Sowa M.E."/>
            <person name="Clark A.B."/>
            <person name="Kunkel T.A."/>
            <person name="Harper J.W."/>
            <person name="Colaiacovo M.P."/>
            <person name="Elledge S.J."/>
        </authorList>
    </citation>
    <scope>FUNCTION</scope>
    <scope>SUBCELLULAR LOCATION</scope>
    <scope>INTERACTION WITH FANCD2; MLH1; MLH3 AND PMS2</scope>
    <scope>MUTAGENESIS OF CYS-44; CYS-47; LEU-477; GLN-864; ASP-960; GLU-975 AND LYS-977</scope>
</reference>
<reference key="10">
    <citation type="journal article" date="2010" name="Science">
        <title>FAN1 acts with FANCI-FANCD2 to promote DNA interstrand cross-link repair.</title>
        <authorList>
            <person name="Liu T."/>
            <person name="Ghosal G."/>
            <person name="Yuan J."/>
            <person name="Chen J."/>
            <person name="Huang J."/>
        </authorList>
    </citation>
    <scope>FUNCTION</scope>
    <scope>CATALYTIC ACTIVITY</scope>
    <scope>SUBCELLULAR LOCATION</scope>
    <scope>DOMAIN UBZ-TYPE</scope>
    <scope>INTERACTION WITH FANCD2 AND FANCI</scope>
    <scope>MUTAGENESIS OF CYS-44; ASP-960 AND LYS-977</scope>
</reference>
<reference key="11">
    <citation type="journal article" date="2010" name="Proc. Natl. Acad. Sci. U.S.A.">
        <title>KIAA1018/FAN1 nuclease protects cells against genomic instability induced by interstrand cross-linking agents.</title>
        <authorList>
            <person name="Yoshikiyo K."/>
            <person name="Kratz K."/>
            <person name="Hirota K."/>
            <person name="Nishihara K."/>
            <person name="Takata M."/>
            <person name="Kurumizaka H."/>
            <person name="Horimoto S."/>
            <person name="Takeda S."/>
            <person name="Jiricny J."/>
        </authorList>
    </citation>
    <scope>FUNCTION</scope>
</reference>
<reference key="12">
    <citation type="journal article" date="2012" name="Ai Zheng">
        <title>Human KIAA1018/FAN1 nuclease is a new mitotic substrate of APC/C(Cdh1).</title>
        <authorList>
            <person name="Lai F."/>
            <person name="Hu K."/>
            <person name="Wu Y."/>
            <person name="Tang J."/>
            <person name="Sang Y."/>
            <person name="Cao J."/>
            <person name="Kang T."/>
        </authorList>
    </citation>
    <scope>UBIQUITINATION</scope>
    <scope>PROTEASOMAL DEGRADATION</scope>
    <scope>IDENTIFICATION OF D-BOX AND KEN BOX MOTIFS</scope>
</reference>
<reference key="13">
    <citation type="journal article" date="2013" name="J. Proteome Res.">
        <title>Toward a comprehensive characterization of a human cancer cell phosphoproteome.</title>
        <authorList>
            <person name="Zhou H."/>
            <person name="Di Palma S."/>
            <person name="Preisinger C."/>
            <person name="Peng M."/>
            <person name="Polat A.N."/>
            <person name="Heck A.J."/>
            <person name="Mohammed S."/>
        </authorList>
    </citation>
    <scope>PHOSPHORYLATION [LARGE SCALE ANALYSIS] AT SER-180</scope>
    <scope>IDENTIFICATION BY MASS SPECTROMETRY [LARGE SCALE ANALYSIS]</scope>
    <source>
        <tissue>Erythroleukemia</tissue>
    </source>
</reference>
<reference key="14">
    <citation type="journal article" date="2014" name="Cell Rep.">
        <title>FAN1 activity on asymmetric repair intermediates is mediated by an atypical monomeric virus-type replication-repair nuclease domain.</title>
        <authorList>
            <person name="Pennell S."/>
            <person name="Declais A.C."/>
            <person name="Li J."/>
            <person name="Haire L.F."/>
            <person name="Berg W."/>
            <person name="Saldanha J.W."/>
            <person name="Taylor I.A."/>
            <person name="Rouse J."/>
            <person name="Lilley D.M."/>
            <person name="Smerdon S.J."/>
        </authorList>
    </citation>
    <scope>FUNCTION</scope>
</reference>
<reference key="15">
    <citation type="journal article" date="2014" name="Mol. Cell. Biol.">
        <title>FANCD2-controlled chromatin access of the Fanconi-associated nuclease FAN1 is crucial for the recovery of stalled replication forks.</title>
        <authorList>
            <person name="Chaudhury I."/>
            <person name="Stroik D.R."/>
            <person name="Sobeck A."/>
        </authorList>
    </citation>
    <scope>FUNCTION</scope>
</reference>
<reference key="16">
    <citation type="journal article" date="2014" name="Proc. Natl. Acad. Sci. U.S.A.">
        <title>Scan statistic-based analysis of exome sequencing data identifies FAN1 at 15q13.3 as a susceptibility gene for schizophrenia and autism.</title>
        <authorList>
            <person name="Ionita-Laza I."/>
            <person name="Xu B."/>
            <person name="Makarov V."/>
            <person name="Buxbaum J.D."/>
            <person name="Roos J.L."/>
            <person name="Gogos J.A."/>
            <person name="Karayiorgou M."/>
        </authorList>
    </citation>
    <scope>POSSIBLE INVOLVEMENT IN SCHIZOPHRENIA AND AUTISM</scope>
</reference>
<reference key="17">
    <citation type="journal article" date="2014" name="Science">
        <title>DNA repair. Mechanism of DNA interstrand cross-link processing by repair nuclease FAN1.</title>
        <authorList>
            <person name="Wang R."/>
            <person name="Persky N.S."/>
            <person name="Yoo B."/>
            <person name="Ouerfelli O."/>
            <person name="Smogorzewska A."/>
            <person name="Elledge S.J."/>
            <person name="Pavletich N.P."/>
        </authorList>
    </citation>
    <scope>X-RAY CRYSTALLOGRAPHY (2.80 ANGSTROMS) OF 364-1017 IN COMPLEX WITH TARGET DNA AND CALCIUM</scope>
    <scope>FUNCTION</scope>
    <scope>MUTAGENESIS OF ARG-706 AND ARG-952</scope>
</reference>
<reference key="18">
    <citation type="journal article" date="2012" name="Nat. Genet.">
        <title>FAN1 mutations cause karyomegalic interstitial nephritis, linking chronic kidney failure to defective DNA damage repair.</title>
        <authorList>
            <person name="Zhou W."/>
            <person name="Otto E.A."/>
            <person name="Cluckey A."/>
            <person name="Airik R."/>
            <person name="Hurd T.W."/>
            <person name="Chaki M."/>
            <person name="Diaz K."/>
            <person name="Lach F.P."/>
            <person name="Bennett G.R."/>
            <person name="Gee H.Y."/>
            <person name="Ghosh A.K."/>
            <person name="Natarajan S."/>
            <person name="Thongthip S."/>
            <person name="Veturi U."/>
            <person name="Allen S.J."/>
            <person name="Janssen S."/>
            <person name="Ramaswami G."/>
            <person name="Dixon J."/>
            <person name="Burkhalter F."/>
            <person name="Spoendlin M."/>
            <person name="Moch H."/>
            <person name="Mihatsch M.J."/>
            <person name="Verine J."/>
            <person name="Reade R."/>
            <person name="Soliman H."/>
            <person name="Godin M."/>
            <person name="Kiss D."/>
            <person name="Monga G."/>
            <person name="Mazzucco G."/>
            <person name="Amann K."/>
            <person name="Artunc F."/>
            <person name="Newland R.C."/>
            <person name="Wiech T."/>
            <person name="Zschiedrich S."/>
            <person name="Huber T.B."/>
            <person name="Friedl A."/>
            <person name="Slaats G.G."/>
            <person name="Joles J.A."/>
            <person name="Goldschmeding R."/>
            <person name="Washburn J."/>
            <person name="Giles R.H."/>
            <person name="Levy S."/>
            <person name="Smogorzewska A."/>
            <person name="Hildebrandt F."/>
        </authorList>
    </citation>
    <scope>VARIANTS KMIN ARG-871; PRO-929; ASP-937 AND ASN-960</scope>
</reference>
<accession>Q9Y2M0</accession>
<accession>A8K4M2</accession>
<accession>Q86WU8</accession>
<evidence type="ECO:0000250" key="1">
    <source>
        <dbReference type="UniProtKB" id="Q9I2N0"/>
    </source>
</evidence>
<evidence type="ECO:0000255" key="2"/>
<evidence type="ECO:0000255" key="3">
    <source>
        <dbReference type="PROSITE-ProRule" id="PRU01256"/>
    </source>
</evidence>
<evidence type="ECO:0000256" key="4">
    <source>
        <dbReference type="SAM" id="MobiDB-lite"/>
    </source>
</evidence>
<evidence type="ECO:0000269" key="5">
    <source>
    </source>
</evidence>
<evidence type="ECO:0000269" key="6">
    <source>
    </source>
</evidence>
<evidence type="ECO:0000269" key="7">
    <source>
    </source>
</evidence>
<evidence type="ECO:0000269" key="8">
    <source>
    </source>
</evidence>
<evidence type="ECO:0000269" key="9">
    <source>
    </source>
</evidence>
<evidence type="ECO:0000269" key="10">
    <source>
    </source>
</evidence>
<evidence type="ECO:0000269" key="11">
    <source>
    </source>
</evidence>
<evidence type="ECO:0000269" key="12">
    <source>
    </source>
</evidence>
<evidence type="ECO:0000269" key="13">
    <source>
    </source>
</evidence>
<evidence type="ECO:0000269" key="14">
    <source>
    </source>
</evidence>
<evidence type="ECO:0000269" key="15">
    <source>
    </source>
</evidence>
<evidence type="ECO:0000269" key="16">
    <source>
    </source>
</evidence>
<evidence type="ECO:0000303" key="17">
    <source>
    </source>
</evidence>
<evidence type="ECO:0000303" key="18">
    <source>
    </source>
</evidence>
<evidence type="ECO:0000303" key="19">
    <source>
    </source>
</evidence>
<evidence type="ECO:0000303" key="20">
    <source>
    </source>
</evidence>
<evidence type="ECO:0000303" key="21">
    <source>
    </source>
</evidence>
<evidence type="ECO:0000303" key="22">
    <source>
    </source>
</evidence>
<evidence type="ECO:0000303" key="23">
    <source>
    </source>
</evidence>
<evidence type="ECO:0000305" key="24"/>
<evidence type="ECO:0007744" key="25">
    <source>
    </source>
</evidence>
<evidence type="ECO:0007829" key="26">
    <source>
        <dbReference type="PDB" id="4REC"/>
    </source>
</evidence>
<evidence type="ECO:0007829" key="27">
    <source>
        <dbReference type="PDB" id="4RI8"/>
    </source>
</evidence>
<evidence type="ECO:0007829" key="28">
    <source>
        <dbReference type="PDB" id="4RI9"/>
    </source>
</evidence>
<evidence type="ECO:0007829" key="29">
    <source>
        <dbReference type="PDB" id="4RIB"/>
    </source>
</evidence>
<evidence type="ECO:0007829" key="30">
    <source>
        <dbReference type="PDB" id="4RIC"/>
    </source>
</evidence>
<evidence type="ECO:0007829" key="31">
    <source>
        <dbReference type="PDB" id="4RID"/>
    </source>
</evidence>
<evidence type="ECO:0007829" key="32">
    <source>
        <dbReference type="PDB" id="4RY3"/>
    </source>
</evidence>
<protein>
    <recommendedName>
        <fullName evidence="20 21 22">Fanconi-associated nuclease 1</fullName>
        <ecNumber evidence="6 7 9">3.1.21.-</ecNumber>
        <ecNumber evidence="6 7">3.1.4.1</ecNumber>
    </recommendedName>
    <alternativeName>
        <fullName evidence="20 21 22">FANCD2/FANCI-associated nuclease 1</fullName>
        <shortName evidence="23">hFAN1</shortName>
    </alternativeName>
    <alternativeName>
        <fullName>Myotubularin-related protein 15</fullName>
    </alternativeName>
</protein>
<dbReference type="EC" id="3.1.21.-" evidence="6 7 9"/>
<dbReference type="EC" id="3.1.4.1" evidence="6 7"/>
<dbReference type="EMBL" id="AB023235">
    <property type="protein sequence ID" value="BAA76862.3"/>
    <property type="status" value="ALT_INIT"/>
    <property type="molecule type" value="mRNA"/>
</dbReference>
<dbReference type="EMBL" id="AK290987">
    <property type="protein sequence ID" value="BAF83676.1"/>
    <property type="molecule type" value="mRNA"/>
</dbReference>
<dbReference type="EMBL" id="AC087481">
    <property type="status" value="NOT_ANNOTATED_CDS"/>
    <property type="molecule type" value="Genomic_DNA"/>
</dbReference>
<dbReference type="EMBL" id="BC047882">
    <property type="protein sequence ID" value="AAH47882.1"/>
    <property type="status" value="ALT_INIT"/>
    <property type="molecule type" value="mRNA"/>
</dbReference>
<dbReference type="CCDS" id="CCDS32186.1">
    <molecule id="Q9Y2M0-1"/>
</dbReference>
<dbReference type="CCDS" id="CCDS58344.1">
    <molecule id="Q9Y2M0-2"/>
</dbReference>
<dbReference type="RefSeq" id="NP_001139566.1">
    <molecule id="Q9Y2M0-2"/>
    <property type="nucleotide sequence ID" value="NM_001146094.2"/>
</dbReference>
<dbReference type="RefSeq" id="NP_001139567.1">
    <molecule id="Q9Y2M0-2"/>
    <property type="nucleotide sequence ID" value="NM_001146095.1"/>
</dbReference>
<dbReference type="RefSeq" id="NP_001139568.1">
    <molecule id="Q9Y2M0-2"/>
    <property type="nucleotide sequence ID" value="NM_001146096.2"/>
</dbReference>
<dbReference type="RefSeq" id="NP_055782.3">
    <molecule id="Q9Y2M0-1"/>
    <property type="nucleotide sequence ID" value="NM_014967.5"/>
</dbReference>
<dbReference type="RefSeq" id="XP_005254289.1">
    <property type="nucleotide sequence ID" value="XM_005254232.4"/>
</dbReference>
<dbReference type="RefSeq" id="XP_005254291.1">
    <property type="nucleotide sequence ID" value="XM_005254234.4"/>
</dbReference>
<dbReference type="RefSeq" id="XP_005254292.1">
    <property type="nucleotide sequence ID" value="XM_005254235.3"/>
</dbReference>
<dbReference type="PDB" id="4REA">
    <property type="method" value="X-ray"/>
    <property type="resolution" value="3.81 A"/>
    <property type="chains" value="A/B=373-1017"/>
</dbReference>
<dbReference type="PDB" id="4REB">
    <property type="method" value="X-ray"/>
    <property type="resolution" value="4.20 A"/>
    <property type="chains" value="A/H=373-1017"/>
</dbReference>
<dbReference type="PDB" id="4REC">
    <property type="method" value="X-ray"/>
    <property type="resolution" value="2.20 A"/>
    <property type="chains" value="A=373-1017"/>
</dbReference>
<dbReference type="PDB" id="4RI8">
    <property type="method" value="X-ray"/>
    <property type="resolution" value="2.90 A"/>
    <property type="chains" value="A/B=370-1017"/>
</dbReference>
<dbReference type="PDB" id="4RI9">
    <property type="method" value="X-ray"/>
    <property type="resolution" value="2.90 A"/>
    <property type="chains" value="A/B=370-1017"/>
</dbReference>
<dbReference type="PDB" id="4RIA">
    <property type="method" value="X-ray"/>
    <property type="resolution" value="3.00 A"/>
    <property type="chains" value="A/B=370-1017"/>
</dbReference>
<dbReference type="PDB" id="4RIB">
    <property type="method" value="X-ray"/>
    <property type="resolution" value="3.25 A"/>
    <property type="chains" value="A/B=364-1017"/>
</dbReference>
<dbReference type="PDB" id="4RIC">
    <property type="method" value="X-ray"/>
    <property type="resolution" value="2.80 A"/>
    <property type="chains" value="A/B=370-1009"/>
</dbReference>
<dbReference type="PDB" id="4RID">
    <property type="method" value="X-ray"/>
    <property type="resolution" value="3.30 A"/>
    <property type="chains" value="A/B=370-1009"/>
</dbReference>
<dbReference type="PDB" id="4RY3">
    <property type="method" value="X-ray"/>
    <property type="resolution" value="2.80 A"/>
    <property type="chains" value="A=371-1010"/>
</dbReference>
<dbReference type="PDB" id="8S5A">
    <property type="method" value="X-ray"/>
    <property type="resolution" value="2.65 A"/>
    <property type="chains" value="A=364-1017"/>
</dbReference>
<dbReference type="PDB" id="9CG4">
    <property type="method" value="EM"/>
    <property type="resolution" value="3.37 A"/>
    <property type="chains" value="E=372-554"/>
</dbReference>
<dbReference type="PDB" id="9CHM">
    <property type="method" value="EM"/>
    <property type="resolution" value="3.47 A"/>
    <property type="chains" value="E=372-555"/>
</dbReference>
<dbReference type="PDB" id="9CL7">
    <property type="method" value="EM"/>
    <property type="resolution" value="3.83 A"/>
    <property type="chains" value="E=372-1010"/>
</dbReference>
<dbReference type="PDB" id="9CMA">
    <property type="method" value="EM"/>
    <property type="resolution" value="3.97 A"/>
    <property type="chains" value="A=372-1017"/>
</dbReference>
<dbReference type="PDB" id="9EO1">
    <property type="method" value="EM"/>
    <property type="resolution" value="3.20 A"/>
    <property type="chains" value="A=372-1007"/>
</dbReference>
<dbReference type="PDB" id="9EOA">
    <property type="method" value="EM"/>
    <property type="resolution" value="3.27 A"/>
    <property type="chains" value="A=372-1007"/>
</dbReference>
<dbReference type="PDB" id="9GY0">
    <property type="method" value="EM"/>
    <property type="resolution" value="3.42 A"/>
    <property type="chains" value="A=1-1017"/>
</dbReference>
<dbReference type="PDBsum" id="4REA"/>
<dbReference type="PDBsum" id="4REB"/>
<dbReference type="PDBsum" id="4REC"/>
<dbReference type="PDBsum" id="4RI8"/>
<dbReference type="PDBsum" id="4RI9"/>
<dbReference type="PDBsum" id="4RIA"/>
<dbReference type="PDBsum" id="4RIB"/>
<dbReference type="PDBsum" id="4RIC"/>
<dbReference type="PDBsum" id="4RID"/>
<dbReference type="PDBsum" id="4RY3"/>
<dbReference type="PDBsum" id="8S5A"/>
<dbReference type="PDBsum" id="9CG4"/>
<dbReference type="PDBsum" id="9CHM"/>
<dbReference type="PDBsum" id="9CL7"/>
<dbReference type="PDBsum" id="9CMA"/>
<dbReference type="PDBsum" id="9EO1"/>
<dbReference type="PDBsum" id="9EOA"/>
<dbReference type="PDBsum" id="9GY0"/>
<dbReference type="EMDB" id="EMD-19844"/>
<dbReference type="EMDB" id="EMD-19850"/>
<dbReference type="EMDB" id="EMD-45568"/>
<dbReference type="EMDB" id="EMD-45590"/>
<dbReference type="EMDB" id="EMD-45664"/>
<dbReference type="EMDB" id="EMD-45745"/>
<dbReference type="EMDB" id="EMD-51680"/>
<dbReference type="SMR" id="Q9Y2M0"/>
<dbReference type="BioGRID" id="116573">
    <property type="interactions" value="57"/>
</dbReference>
<dbReference type="FunCoup" id="Q9Y2M0">
    <property type="interactions" value="3044"/>
</dbReference>
<dbReference type="IntAct" id="Q9Y2M0">
    <property type="interactions" value="27"/>
</dbReference>
<dbReference type="MINT" id="Q9Y2M0"/>
<dbReference type="STRING" id="9606.ENSP00000354497"/>
<dbReference type="DEPOD" id="FAN1"/>
<dbReference type="GlyGen" id="Q9Y2M0">
    <property type="glycosylation" value="1 site, 1 O-linked glycan (1 site)"/>
</dbReference>
<dbReference type="iPTMnet" id="Q9Y2M0"/>
<dbReference type="PhosphoSitePlus" id="Q9Y2M0"/>
<dbReference type="BioMuta" id="FAN1"/>
<dbReference type="DMDM" id="160410012"/>
<dbReference type="jPOST" id="Q9Y2M0"/>
<dbReference type="MassIVE" id="Q9Y2M0"/>
<dbReference type="PaxDb" id="9606-ENSP00000354497"/>
<dbReference type="PeptideAtlas" id="Q9Y2M0"/>
<dbReference type="ProteomicsDB" id="85841">
    <molecule id="Q9Y2M0-1"/>
</dbReference>
<dbReference type="ProteomicsDB" id="85842">
    <molecule id="Q9Y2M0-2"/>
</dbReference>
<dbReference type="Antibodypedia" id="22515">
    <property type="antibodies" value="124 antibodies from 22 providers"/>
</dbReference>
<dbReference type="DNASU" id="22909"/>
<dbReference type="Ensembl" id="ENST00000362065.9">
    <molecule id="Q9Y2M0-1"/>
    <property type="protein sequence ID" value="ENSP00000354497.4"/>
    <property type="gene ID" value="ENSG00000198690.10"/>
</dbReference>
<dbReference type="Ensembl" id="ENST00000561594.5">
    <molecule id="Q9Y2M0-2"/>
    <property type="protein sequence ID" value="ENSP00000455983.1"/>
    <property type="gene ID" value="ENSG00000198690.10"/>
</dbReference>
<dbReference type="Ensembl" id="ENST00000561607.6">
    <molecule id="Q9Y2M0-2"/>
    <property type="protein sequence ID" value="ENSP00000454223.1"/>
    <property type="gene ID" value="ENSG00000198690.10"/>
</dbReference>
<dbReference type="Ensembl" id="ENST00000565466.5">
    <molecule id="Q9Y2M0-2"/>
    <property type="protein sequence ID" value="ENSP00000454544.1"/>
    <property type="gene ID" value="ENSG00000198690.10"/>
</dbReference>
<dbReference type="Ensembl" id="ENST00000621063.1">
    <molecule id="Q9Y2M0-1"/>
    <property type="protein sequence ID" value="ENSP00000484956.1"/>
    <property type="gene ID" value="ENSG00000276787.1"/>
</dbReference>
<dbReference type="Ensembl" id="ENST00000656435.1">
    <molecule id="Q9Y2M0-1"/>
    <property type="protein sequence ID" value="ENSP00000499534.1"/>
    <property type="gene ID" value="ENSG00000198690.10"/>
</dbReference>
<dbReference type="Ensembl" id="ENST00000657391.1">
    <molecule id="Q9Y2M0-1"/>
    <property type="protein sequence ID" value="ENSP00000499703.1"/>
    <property type="gene ID" value="ENSG00000198690.10"/>
</dbReference>
<dbReference type="Ensembl" id="ENST00000658773.1">
    <molecule id="Q9Y2M0-2"/>
    <property type="protein sequence ID" value="ENSP00000499742.1"/>
    <property type="gene ID" value="ENSG00000198690.10"/>
</dbReference>
<dbReference type="Ensembl" id="ENST00000670849.1">
    <molecule id="Q9Y2M0-1"/>
    <property type="protein sequence ID" value="ENSP00000499638.1"/>
    <property type="gene ID" value="ENSG00000198690.10"/>
</dbReference>
<dbReference type="GeneID" id="22909"/>
<dbReference type="KEGG" id="hsa:22909"/>
<dbReference type="MANE-Select" id="ENST00000362065.9">
    <property type="protein sequence ID" value="ENSP00000354497.4"/>
    <property type="RefSeq nucleotide sequence ID" value="NM_014967.5"/>
    <property type="RefSeq protein sequence ID" value="NP_055782.3"/>
</dbReference>
<dbReference type="UCSC" id="uc001zfc.3">
    <molecule id="Q9Y2M0-1"/>
    <property type="organism name" value="human"/>
</dbReference>
<dbReference type="AGR" id="HGNC:29170"/>
<dbReference type="CTD" id="22909"/>
<dbReference type="DisGeNET" id="22909"/>
<dbReference type="GeneCards" id="FAN1"/>
<dbReference type="HGNC" id="HGNC:29170">
    <property type="gene designation" value="FAN1"/>
</dbReference>
<dbReference type="HPA" id="ENSG00000198690">
    <property type="expression patterns" value="Low tissue specificity"/>
</dbReference>
<dbReference type="MalaCards" id="FAN1"/>
<dbReference type="MIM" id="613534">
    <property type="type" value="gene"/>
</dbReference>
<dbReference type="MIM" id="614817">
    <property type="type" value="phenotype"/>
</dbReference>
<dbReference type="neXtProt" id="NX_Q9Y2M0"/>
<dbReference type="OpenTargets" id="ENSG00000198690"/>
<dbReference type="Orphanet" id="401996">
    <property type="disease" value="Karyomegalic interstitial nephritis"/>
</dbReference>
<dbReference type="PharmGKB" id="PA165478601"/>
<dbReference type="VEuPathDB" id="HostDB:ENSG00000198690"/>
<dbReference type="eggNOG" id="KOG2143">
    <property type="taxonomic scope" value="Eukaryota"/>
</dbReference>
<dbReference type="GeneTree" id="ENSGT00390000018637"/>
<dbReference type="HOGENOM" id="CLU_005116_4_0_1"/>
<dbReference type="InParanoid" id="Q9Y2M0"/>
<dbReference type="OMA" id="ECRVESM"/>
<dbReference type="OrthoDB" id="76364at2759"/>
<dbReference type="PAN-GO" id="Q9Y2M0">
    <property type="GO annotations" value="5 GO annotations based on evolutionary models"/>
</dbReference>
<dbReference type="PhylomeDB" id="Q9Y2M0"/>
<dbReference type="TreeFam" id="TF312870"/>
<dbReference type="PathwayCommons" id="Q9Y2M0"/>
<dbReference type="Reactome" id="R-HSA-6783310">
    <property type="pathway name" value="Fanconi Anemia Pathway"/>
</dbReference>
<dbReference type="SignaLink" id="Q9Y2M0"/>
<dbReference type="BioGRID-ORCS" id="22909">
    <property type="hits" value="13 hits in 1160 CRISPR screens"/>
</dbReference>
<dbReference type="ChiTaRS" id="FAN1">
    <property type="organism name" value="human"/>
</dbReference>
<dbReference type="EvolutionaryTrace" id="Q9Y2M0"/>
<dbReference type="GenomeRNAi" id="22909"/>
<dbReference type="Pharos" id="Q9Y2M0">
    <property type="development level" value="Tbio"/>
</dbReference>
<dbReference type="PRO" id="PR:Q9Y2M0"/>
<dbReference type="Proteomes" id="UP000005640">
    <property type="component" value="Chromosome 15"/>
</dbReference>
<dbReference type="RNAct" id="Q9Y2M0">
    <property type="molecule type" value="protein"/>
</dbReference>
<dbReference type="Bgee" id="ENSG00000198690">
    <property type="expression patterns" value="Expressed in right hemisphere of cerebellum and 150 other cell types or tissues"/>
</dbReference>
<dbReference type="ExpressionAtlas" id="Q9Y2M0">
    <property type="expression patterns" value="baseline and differential"/>
</dbReference>
<dbReference type="GO" id="GO:0005929">
    <property type="term" value="C:cilium"/>
    <property type="evidence" value="ECO:0000314"/>
    <property type="project" value="HPA"/>
</dbReference>
<dbReference type="GO" id="GO:0005829">
    <property type="term" value="C:cytosol"/>
    <property type="evidence" value="ECO:0000314"/>
    <property type="project" value="HPA"/>
</dbReference>
<dbReference type="GO" id="GO:0045171">
    <property type="term" value="C:intercellular bridge"/>
    <property type="evidence" value="ECO:0000314"/>
    <property type="project" value="HPA"/>
</dbReference>
<dbReference type="GO" id="GO:0005654">
    <property type="term" value="C:nucleoplasm"/>
    <property type="evidence" value="ECO:0000314"/>
    <property type="project" value="HPA"/>
</dbReference>
<dbReference type="GO" id="GO:0005634">
    <property type="term" value="C:nucleus"/>
    <property type="evidence" value="ECO:0000314"/>
    <property type="project" value="UniProtKB"/>
</dbReference>
<dbReference type="GO" id="GO:0008409">
    <property type="term" value="F:5'-3' exonuclease activity"/>
    <property type="evidence" value="ECO:0000314"/>
    <property type="project" value="UniProtKB"/>
</dbReference>
<dbReference type="GO" id="GO:0017108">
    <property type="term" value="F:5'-flap endonuclease activity"/>
    <property type="evidence" value="ECO:0000314"/>
    <property type="project" value="UniProtKB"/>
</dbReference>
<dbReference type="GO" id="GO:0070336">
    <property type="term" value="F:flap-structured DNA binding"/>
    <property type="evidence" value="ECO:0000314"/>
    <property type="project" value="UniProtKB"/>
</dbReference>
<dbReference type="GO" id="GO:0000287">
    <property type="term" value="F:magnesium ion binding"/>
    <property type="evidence" value="ECO:0000304"/>
    <property type="project" value="UniProtKB"/>
</dbReference>
<dbReference type="GO" id="GO:0004528">
    <property type="term" value="F:phosphodiesterase I activity"/>
    <property type="evidence" value="ECO:0007669"/>
    <property type="project" value="UniProtKB-EC"/>
</dbReference>
<dbReference type="GO" id="GO:0140036">
    <property type="term" value="F:ubiquitin-modified protein reader activity"/>
    <property type="evidence" value="ECO:0000314"/>
    <property type="project" value="UniProtKB"/>
</dbReference>
<dbReference type="GO" id="GO:0008270">
    <property type="term" value="F:zinc ion binding"/>
    <property type="evidence" value="ECO:0007669"/>
    <property type="project" value="UniProtKB-KW"/>
</dbReference>
<dbReference type="GO" id="GO:0006281">
    <property type="term" value="P:DNA repair"/>
    <property type="evidence" value="ECO:0000315"/>
    <property type="project" value="UniProtKB"/>
</dbReference>
<dbReference type="GO" id="GO:0000724">
    <property type="term" value="P:double-strand break repair via homologous recombination"/>
    <property type="evidence" value="ECO:0000315"/>
    <property type="project" value="UniProtKB"/>
</dbReference>
<dbReference type="GO" id="GO:0036297">
    <property type="term" value="P:interstrand cross-link repair"/>
    <property type="evidence" value="ECO:0000314"/>
    <property type="project" value="UniProtKB"/>
</dbReference>
<dbReference type="GO" id="GO:0006289">
    <property type="term" value="P:nucleotide-excision repair"/>
    <property type="evidence" value="ECO:0000314"/>
    <property type="project" value="UniProtKB"/>
</dbReference>
<dbReference type="CDD" id="cd22326">
    <property type="entry name" value="FAN1-like"/>
    <property type="match status" value="1"/>
</dbReference>
<dbReference type="FunFam" id="3.30.160.60:FF:001796">
    <property type="entry name" value="Fanconi-associated nuclease"/>
    <property type="match status" value="1"/>
</dbReference>
<dbReference type="FunFam" id="3.40.1350.10:FF:000004">
    <property type="entry name" value="Fanconi-associated nuclease"/>
    <property type="match status" value="1"/>
</dbReference>
<dbReference type="Gene3D" id="3.40.1350.10">
    <property type="match status" value="1"/>
</dbReference>
<dbReference type="Gene3D" id="3.30.160.60">
    <property type="entry name" value="Classic Zinc Finger"/>
    <property type="match status" value="1"/>
</dbReference>
<dbReference type="InterPro" id="IPR033315">
    <property type="entry name" value="Fan1-like"/>
</dbReference>
<dbReference type="InterPro" id="IPR049132">
    <property type="entry name" value="FAN1-like_euk"/>
</dbReference>
<dbReference type="InterPro" id="IPR049126">
    <property type="entry name" value="FAN1-like_TPR"/>
</dbReference>
<dbReference type="InterPro" id="IPR049125">
    <property type="entry name" value="FAN1-like_WH"/>
</dbReference>
<dbReference type="InterPro" id="IPR049138">
    <property type="entry name" value="Fan1_SAP_met"/>
</dbReference>
<dbReference type="InterPro" id="IPR006642">
    <property type="entry name" value="Rad18_UBZ4"/>
</dbReference>
<dbReference type="InterPro" id="IPR011856">
    <property type="entry name" value="tRNA_endonuc-like_dom_sf"/>
</dbReference>
<dbReference type="InterPro" id="IPR014883">
    <property type="entry name" value="VRR_NUC"/>
</dbReference>
<dbReference type="PANTHER" id="PTHR15749">
    <property type="entry name" value="FANCONI-ASSOCIATED NUCLEASE 1"/>
    <property type="match status" value="1"/>
</dbReference>
<dbReference type="PANTHER" id="PTHR15749:SF4">
    <property type="entry name" value="FANCONI-ASSOCIATED NUCLEASE 1"/>
    <property type="match status" value="1"/>
</dbReference>
<dbReference type="Pfam" id="PF21315">
    <property type="entry name" value="FAN1_HTH"/>
    <property type="match status" value="1"/>
</dbReference>
<dbReference type="Pfam" id="PF21169">
    <property type="entry name" value="Fan1_SAP"/>
    <property type="match status" value="1"/>
</dbReference>
<dbReference type="Pfam" id="PF21170">
    <property type="entry name" value="FAN1_TPR"/>
    <property type="match status" value="1"/>
</dbReference>
<dbReference type="Pfam" id="PF08774">
    <property type="entry name" value="VRR_NUC"/>
    <property type="match status" value="1"/>
</dbReference>
<dbReference type="SMART" id="SM00990">
    <property type="entry name" value="VRR_NUC"/>
    <property type="match status" value="1"/>
</dbReference>
<dbReference type="SMART" id="SM00734">
    <property type="entry name" value="ZnF_Rad18"/>
    <property type="match status" value="1"/>
</dbReference>
<dbReference type="PROSITE" id="PS51908">
    <property type="entry name" value="ZF_UBZ4"/>
    <property type="match status" value="1"/>
</dbReference>
<name>FAN1_HUMAN</name>
<sequence>MMSEGKPPDKKRPRRSLSISKNKKKASNSIISCFNNAPPAKLACPVCSKMVPRYDLNRHLDEMCANNDFVQVDPGQVGLINSNVSMVDLTSVTLEDVTPKKSPPPKTNLTPGQSDSAKREVKQKISPYFKSNDVVCKNQDELRNRSVKVICLGSLASKLSRKYVKAKKSIDKDEEFAGSSPQSSKSTVVKSLIDNSSEIEDEDQILENSSQKENVFKCDSLKEECIPEHMVRGSKIMEAESQKATRECEKSALTPGFSDNAIMLFSPDFTLRNTLKSTSEDSLVKQECIKEVVEKREACHCEEVKMTVASEAKIQLSDSEAKSHSSADDASAWSNIQEAPLQDDSCLNNDIPHSIPLEQGSSCNGPGQTTGHPYYLRSFLVVLKTVLENEDDMLLFDEQEKGIVTKFYQLSATGQKLYVRLFQRKLSWIKMTKLEYEEIALDLTPVIEELTNAGFLQTESELQELSEVLELLSAPELKSLAKTFHLVNPNGQKQQLVDAFLKLAKQRSVCTWGKNKPGIGAVILKRAKALAGQSVRICKGPRAVFSRILLLFSLTDSMEDEDAACGGQGQLSTVLLVNLGRMEFPSYTINRKTHIFQDRDDLIRYAAATHMLSDISSAMANGNWEEAKELAQCAKRDWNRLKNHPSLRCHEDLPLFLRCFTVGWIYTRILSRFVEILQRLHMYEEAVRELESLLSQRIYCPDSRGRWWDRLALNLHQHLKRLEPTIKCITEGLADPEVRTGHRLSLYQRAVRLRESPSCKKFKHLFQQLPEMAVQDVKHVTITGRLCPQRGMCKSVFVMEAGEAADPTTVLCSVEELALAHYRRSGFDQGIHGEGSTFSTLYGLLLWDIIFMDGIPDVFRNACQAFPLDLCTDSFFTSRRPALEARLQLIHDAPEESLRAWVAATWHEQEGRVASLVSWDRFTSLQQAQDLVSCLGGPVLSGVCRHLAADFRHCRGGLPDLVVWNSQSRHFKLVEVKGPNDRLSHKQMIWLAELQKLGAEVEVCHVVAVGAKSQSLS</sequence>
<keyword id="KW-0002">3D-structure</keyword>
<keyword id="KW-0025">Alternative splicing</keyword>
<keyword id="KW-0175">Coiled coil</keyword>
<keyword id="KW-0225">Disease variant</keyword>
<keyword id="KW-0227">DNA damage</keyword>
<keyword id="KW-0234">DNA repair</keyword>
<keyword id="KW-0255">Endonuclease</keyword>
<keyword id="KW-0269">Exonuclease</keyword>
<keyword id="KW-0378">Hydrolase</keyword>
<keyword id="KW-0460">Magnesium</keyword>
<keyword id="KW-0464">Manganese</keyword>
<keyword id="KW-0479">Metal-binding</keyword>
<keyword id="KW-0540">Nuclease</keyword>
<keyword id="KW-0539">Nucleus</keyword>
<keyword id="KW-0597">Phosphoprotein</keyword>
<keyword id="KW-1267">Proteomics identification</keyword>
<keyword id="KW-1185">Reference proteome</keyword>
<keyword id="KW-0832">Ubl conjugation</keyword>
<keyword id="KW-0862">Zinc</keyword>
<keyword id="KW-0863">Zinc-finger</keyword>
<proteinExistence type="evidence at protein level"/>
<gene>
    <name evidence="20" type="primary">FAN1</name>
    <name evidence="17" type="synonym">KIAA1018</name>
    <name type="synonym">MTMR15</name>
</gene>